<feature type="chain" id="PRO_0000386700" description="Ribosomal RNA small subunit methyltransferase H">
    <location>
        <begin position="1"/>
        <end position="322"/>
    </location>
</feature>
<feature type="binding site" evidence="1">
    <location>
        <begin position="40"/>
        <end position="42"/>
    </location>
    <ligand>
        <name>S-adenosyl-L-methionine</name>
        <dbReference type="ChEBI" id="CHEBI:59789"/>
    </ligand>
</feature>
<feature type="binding site" evidence="1">
    <location>
        <position position="60"/>
    </location>
    <ligand>
        <name>S-adenosyl-L-methionine</name>
        <dbReference type="ChEBI" id="CHEBI:59789"/>
    </ligand>
</feature>
<feature type="binding site" evidence="1">
    <location>
        <position position="84"/>
    </location>
    <ligand>
        <name>S-adenosyl-L-methionine</name>
        <dbReference type="ChEBI" id="CHEBI:59789"/>
    </ligand>
</feature>
<feature type="binding site" evidence="1">
    <location>
        <position position="106"/>
    </location>
    <ligand>
        <name>S-adenosyl-L-methionine</name>
        <dbReference type="ChEBI" id="CHEBI:59789"/>
    </ligand>
</feature>
<feature type="binding site" evidence="1">
    <location>
        <position position="113"/>
    </location>
    <ligand>
        <name>S-adenosyl-L-methionine</name>
        <dbReference type="ChEBI" id="CHEBI:59789"/>
    </ligand>
</feature>
<accession>C6AKG2</accession>
<organism>
    <name type="scientific">Aggregatibacter aphrophilus (strain NJ8700)</name>
    <name type="common">Haemophilus aphrophilus</name>
    <dbReference type="NCBI Taxonomy" id="634176"/>
    <lineage>
        <taxon>Bacteria</taxon>
        <taxon>Pseudomonadati</taxon>
        <taxon>Pseudomonadota</taxon>
        <taxon>Gammaproteobacteria</taxon>
        <taxon>Pasteurellales</taxon>
        <taxon>Pasteurellaceae</taxon>
        <taxon>Aggregatibacter</taxon>
    </lineage>
</organism>
<evidence type="ECO:0000255" key="1">
    <source>
        <dbReference type="HAMAP-Rule" id="MF_01007"/>
    </source>
</evidence>
<sequence length="322" mass="35849">MTHLNAFSSVEHSTVLLHETVDGLALKENGIYIDGTFGRGGHSRLILSKLSANGKLIAIDRDPKAVAEAQKIQDPRFQIEHNTFSEILSICEKRGLVGKIDGILLDLGVSSPQLDDAARGFSFMKDGPLDMRMDDSKGISAAEWLQQVSEQDLAWVLKTFGEERFAKKIAKAIVNYNKSAVQNGSEFLTRTLQLAELIAHTVPFKDKHKHPATRSFQAIRIFINAELDELEKVLQSALTVLAPAGRLSVISFHSLEDRMVKHFMRKQSQGREIPKGLPLREDQIQRNQTLKVIGKAIMPTDAEIAQNPRARSAVLRVAERLN</sequence>
<proteinExistence type="inferred from homology"/>
<protein>
    <recommendedName>
        <fullName evidence="1">Ribosomal RNA small subunit methyltransferase H</fullName>
        <ecNumber evidence="1">2.1.1.199</ecNumber>
    </recommendedName>
    <alternativeName>
        <fullName evidence="1">16S rRNA m(4)C1402 methyltransferase</fullName>
    </alternativeName>
    <alternativeName>
        <fullName evidence="1">rRNA (cytosine-N(4)-)-methyltransferase RsmH</fullName>
    </alternativeName>
</protein>
<keyword id="KW-0963">Cytoplasm</keyword>
<keyword id="KW-0489">Methyltransferase</keyword>
<keyword id="KW-0698">rRNA processing</keyword>
<keyword id="KW-0949">S-adenosyl-L-methionine</keyword>
<keyword id="KW-0808">Transferase</keyword>
<gene>
    <name evidence="1" type="primary">rsmH</name>
    <name type="synonym">mraW</name>
    <name type="ordered locus">NT05HA_0210</name>
</gene>
<comment type="function">
    <text evidence="1">Specifically methylates the N4 position of cytidine in position 1402 (C1402) of 16S rRNA.</text>
</comment>
<comment type="catalytic activity">
    <reaction evidence="1">
        <text>cytidine(1402) in 16S rRNA + S-adenosyl-L-methionine = N(4)-methylcytidine(1402) in 16S rRNA + S-adenosyl-L-homocysteine + H(+)</text>
        <dbReference type="Rhea" id="RHEA:42928"/>
        <dbReference type="Rhea" id="RHEA-COMP:10286"/>
        <dbReference type="Rhea" id="RHEA-COMP:10287"/>
        <dbReference type="ChEBI" id="CHEBI:15378"/>
        <dbReference type="ChEBI" id="CHEBI:57856"/>
        <dbReference type="ChEBI" id="CHEBI:59789"/>
        <dbReference type="ChEBI" id="CHEBI:74506"/>
        <dbReference type="ChEBI" id="CHEBI:82748"/>
        <dbReference type="EC" id="2.1.1.199"/>
    </reaction>
</comment>
<comment type="subcellular location">
    <subcellularLocation>
        <location evidence="1">Cytoplasm</location>
    </subcellularLocation>
</comment>
<comment type="similarity">
    <text evidence="1">Belongs to the methyltransferase superfamily. RsmH family.</text>
</comment>
<name>RSMH_AGGAN</name>
<dbReference type="EC" id="2.1.1.199" evidence="1"/>
<dbReference type="EMBL" id="CP001607">
    <property type="protein sequence ID" value="ACS96648.1"/>
    <property type="molecule type" value="Genomic_DNA"/>
</dbReference>
<dbReference type="RefSeq" id="WP_005701429.1">
    <property type="nucleotide sequence ID" value="NC_012913.1"/>
</dbReference>
<dbReference type="SMR" id="C6AKG2"/>
<dbReference type="KEGG" id="aap:NT05HA_0210"/>
<dbReference type="PATRIC" id="fig|634176.19.peg.198"/>
<dbReference type="HOGENOM" id="CLU_038422_2_0_6"/>
<dbReference type="GO" id="GO:0005737">
    <property type="term" value="C:cytoplasm"/>
    <property type="evidence" value="ECO:0007669"/>
    <property type="project" value="UniProtKB-SubCell"/>
</dbReference>
<dbReference type="GO" id="GO:0071424">
    <property type="term" value="F:rRNA (cytosine-N4-)-methyltransferase activity"/>
    <property type="evidence" value="ECO:0007669"/>
    <property type="project" value="UniProtKB-UniRule"/>
</dbReference>
<dbReference type="GO" id="GO:0070475">
    <property type="term" value="P:rRNA base methylation"/>
    <property type="evidence" value="ECO:0007669"/>
    <property type="project" value="UniProtKB-UniRule"/>
</dbReference>
<dbReference type="FunFam" id="1.10.150.170:FF:000001">
    <property type="entry name" value="Ribosomal RNA small subunit methyltransferase H"/>
    <property type="match status" value="1"/>
</dbReference>
<dbReference type="Gene3D" id="1.10.150.170">
    <property type="entry name" value="Putative methyltransferase TM0872, insert domain"/>
    <property type="match status" value="1"/>
</dbReference>
<dbReference type="Gene3D" id="3.40.50.150">
    <property type="entry name" value="Vaccinia Virus protein VP39"/>
    <property type="match status" value="1"/>
</dbReference>
<dbReference type="HAMAP" id="MF_01007">
    <property type="entry name" value="16SrRNA_methyltr_H"/>
    <property type="match status" value="1"/>
</dbReference>
<dbReference type="InterPro" id="IPR002903">
    <property type="entry name" value="RsmH"/>
</dbReference>
<dbReference type="InterPro" id="IPR023397">
    <property type="entry name" value="SAM-dep_MeTrfase_MraW_recog"/>
</dbReference>
<dbReference type="InterPro" id="IPR029063">
    <property type="entry name" value="SAM-dependent_MTases_sf"/>
</dbReference>
<dbReference type="NCBIfam" id="TIGR00006">
    <property type="entry name" value="16S rRNA (cytosine(1402)-N(4))-methyltransferase RsmH"/>
    <property type="match status" value="1"/>
</dbReference>
<dbReference type="PANTHER" id="PTHR11265:SF0">
    <property type="entry name" value="12S RRNA N4-METHYLCYTIDINE METHYLTRANSFERASE"/>
    <property type="match status" value="1"/>
</dbReference>
<dbReference type="PANTHER" id="PTHR11265">
    <property type="entry name" value="S-ADENOSYL-METHYLTRANSFERASE MRAW"/>
    <property type="match status" value="1"/>
</dbReference>
<dbReference type="Pfam" id="PF01795">
    <property type="entry name" value="Methyltransf_5"/>
    <property type="match status" value="1"/>
</dbReference>
<dbReference type="PIRSF" id="PIRSF004486">
    <property type="entry name" value="MraW"/>
    <property type="match status" value="1"/>
</dbReference>
<dbReference type="SUPFAM" id="SSF81799">
    <property type="entry name" value="Putative methyltransferase TM0872, insert domain"/>
    <property type="match status" value="1"/>
</dbReference>
<dbReference type="SUPFAM" id="SSF53335">
    <property type="entry name" value="S-adenosyl-L-methionine-dependent methyltransferases"/>
    <property type="match status" value="1"/>
</dbReference>
<reference key="1">
    <citation type="journal article" date="2009" name="J. Bacteriol.">
        <title>Complete genome sequence of Aggregatibacter (Haemophilus) aphrophilus NJ8700.</title>
        <authorList>
            <person name="Di Bonaventura M.P."/>
            <person name="DeSalle R."/>
            <person name="Pop M."/>
            <person name="Nagarajan N."/>
            <person name="Figurski D.H."/>
            <person name="Fine D.H."/>
            <person name="Kaplan J.B."/>
            <person name="Planet P.J."/>
        </authorList>
    </citation>
    <scope>NUCLEOTIDE SEQUENCE [LARGE SCALE GENOMIC DNA]</scope>
    <source>
        <strain>NJ8700</strain>
    </source>
</reference>